<feature type="chain" id="PRO_0000024375" description="Rhodopsin kinase GRK1">
    <location>
        <begin position="1"/>
        <end position="560"/>
    </location>
</feature>
<feature type="propeptide" id="PRO_0000024376" description="Removed in mature form" evidence="1">
    <location>
        <begin position="561"/>
        <end position="563"/>
    </location>
</feature>
<feature type="domain" description="RGS" evidence="5">
    <location>
        <begin position="58"/>
        <end position="175"/>
    </location>
</feature>
<feature type="domain" description="Protein kinase" evidence="4">
    <location>
        <begin position="190"/>
        <end position="455"/>
    </location>
</feature>
<feature type="domain" description="AGC-kinase C-terminal" evidence="6">
    <location>
        <begin position="456"/>
        <end position="521"/>
    </location>
</feature>
<feature type="region of interest" description="N-terminal">
    <location>
        <begin position="1"/>
        <end position="189"/>
    </location>
</feature>
<feature type="region of interest" description="Interaction with RCVRN" evidence="2">
    <location>
        <begin position="1"/>
        <end position="15"/>
    </location>
</feature>
<feature type="region of interest" description="C-terminal">
    <location>
        <begin position="456"/>
        <end position="563"/>
    </location>
</feature>
<feature type="region of interest" description="Disordered" evidence="8">
    <location>
        <begin position="539"/>
        <end position="563"/>
    </location>
</feature>
<feature type="compositionally biased region" description="Low complexity" evidence="8">
    <location>
        <begin position="550"/>
        <end position="563"/>
    </location>
</feature>
<feature type="active site" description="Proton acceptor" evidence="4 7">
    <location>
        <position position="317"/>
    </location>
</feature>
<feature type="binding site" evidence="4">
    <location>
        <begin position="196"/>
        <end position="204"/>
    </location>
    <ligand>
        <name>ATP</name>
        <dbReference type="ChEBI" id="CHEBI:30616"/>
    </ligand>
</feature>
<feature type="binding site" evidence="4">
    <location>
        <position position="219"/>
    </location>
    <ligand>
        <name>ATP</name>
        <dbReference type="ChEBI" id="CHEBI:30616"/>
    </ligand>
</feature>
<feature type="modified residue" description="Phosphoserine" evidence="2">
    <location>
        <position position="5"/>
    </location>
</feature>
<feature type="modified residue" description="Phosphothreonine" evidence="2">
    <location>
        <position position="8"/>
    </location>
</feature>
<feature type="modified residue" description="Phosphoserine; by PKA and autocatalysis" evidence="10">
    <location>
        <position position="21"/>
    </location>
</feature>
<feature type="modified residue" description="Phosphoserine; by autocatalysis" evidence="2">
    <location>
        <position position="491"/>
    </location>
</feature>
<feature type="modified residue" description="Phosphothreonine; by autocatalysis" evidence="2">
    <location>
        <position position="492"/>
    </location>
</feature>
<feature type="modified residue" description="Cysteine methyl ester" evidence="2">
    <location>
        <position position="560"/>
    </location>
</feature>
<feature type="lipid moiety-binding region" description="S-farnesyl cysteine" evidence="2">
    <location>
        <position position="560"/>
    </location>
</feature>
<feature type="sequence variant" id="VAR_008283" description="In dbSNP:rs542688076." evidence="13">
    <original>E</original>
    <variation>Q</variation>
    <location>
        <position position="136"/>
    </location>
</feature>
<feature type="sequence variant" id="VAR_008284" description="In dbSNP:rs572803634." evidence="13">
    <original>T</original>
    <variation>M</variation>
    <location>
        <position position="298"/>
    </location>
</feature>
<feature type="sequence variant" id="VAR_008285" description="In dbSNP:rs375409897." evidence="13">
    <original>N</original>
    <variation>S</variation>
    <location>
        <position position="330"/>
    </location>
</feature>
<feature type="sequence variant" id="VAR_006215" description="In CSNBO2; dbSNP:rs777094000." evidence="12">
    <original>V</original>
    <variation>D</variation>
    <location>
        <position position="380"/>
    </location>
</feature>
<feature type="sequence variant" id="VAR_037904" description="In CSNBO2; dbSNP:rs570621429." evidence="11">
    <original>P</original>
    <variation>H</variation>
    <location>
        <position position="391"/>
    </location>
</feature>
<feature type="sequence variant" id="VAR_008286" description="In dbSNP:rs750619057." evidence="13">
    <original>R</original>
    <variation>H</variation>
    <location>
        <position position="438"/>
    </location>
</feature>
<feature type="sequence variant" id="VAR_008287" description="In dbSNP:rs771561763." evidence="13">
    <original>C</original>
    <variation>S</variation>
    <location>
        <position position="514"/>
    </location>
</feature>
<feature type="sequence variant" id="VAR_008288" description="In dbSNP:rs779749742." evidence="13">
    <original>M</original>
    <variation>T</variation>
    <location>
        <position position="522"/>
    </location>
</feature>
<feature type="sequence variant" id="VAR_008289" description="In dbSNP:rs553969577." evidence="13">
    <original>S</original>
    <variation>L</variation>
    <location>
        <position position="536"/>
    </location>
</feature>
<feature type="mutagenesis site" description="Not phosphorylated by PKA." evidence="10">
    <original>S</original>
    <variation>E</variation>
    <location>
        <position position="21"/>
    </location>
</feature>
<feature type="mutagenesis site" description="Loss of autophosphorylation and RHO phosphorylation." evidence="10">
    <original>K</original>
    <variation>A</variation>
    <location>
        <position position="219"/>
    </location>
</feature>
<feature type="helix" evidence="17">
    <location>
        <begin position="7"/>
        <end position="14"/>
    </location>
</feature>
<accession>Q15835</accession>
<accession>Q53X14</accession>
<proteinExistence type="evidence at protein level"/>
<protein>
    <recommendedName>
        <fullName>Rhodopsin kinase GRK1</fullName>
        <shortName>RK</shortName>
        <ecNumber evidence="10">2.7.11.14</ecNumber>
    </recommendedName>
    <alternativeName>
        <fullName evidence="15">G protein-coupled receptor kinase 1</fullName>
    </alternativeName>
</protein>
<keyword id="KW-0002">3D-structure</keyword>
<keyword id="KW-0067">ATP-binding</keyword>
<keyword id="KW-0966">Cell projection</keyword>
<keyword id="KW-1014">Congenital stationary night blindness</keyword>
<keyword id="KW-0225">Disease variant</keyword>
<keyword id="KW-0418">Kinase</keyword>
<keyword id="KW-0449">Lipoprotein</keyword>
<keyword id="KW-0472">Membrane</keyword>
<keyword id="KW-0488">Methylation</keyword>
<keyword id="KW-0547">Nucleotide-binding</keyword>
<keyword id="KW-0597">Phosphoprotein</keyword>
<keyword id="KW-0636">Prenylation</keyword>
<keyword id="KW-1267">Proteomics identification</keyword>
<keyword id="KW-1185">Reference proteome</keyword>
<keyword id="KW-0716">Sensory transduction</keyword>
<keyword id="KW-0723">Serine/threonine-protein kinase</keyword>
<keyword id="KW-0808">Transferase</keyword>
<keyword id="KW-0844">Vision</keyword>
<dbReference type="EC" id="2.7.11.14" evidence="10"/>
<dbReference type="EMBL" id="U63973">
    <property type="protein sequence ID" value="AAB05929.1"/>
    <property type="molecule type" value="mRNA"/>
</dbReference>
<dbReference type="EMBL" id="L77503">
    <property type="protein sequence ID" value="AAG50439.1"/>
    <property type="molecule type" value="mRNA"/>
</dbReference>
<dbReference type="EMBL" id="L77502">
    <property type="protein sequence ID" value="AAT00534.2"/>
    <property type="molecule type" value="Genomic_DNA"/>
</dbReference>
<dbReference type="EMBL" id="L77496">
    <property type="protein sequence ID" value="AAT00534.2"/>
    <property type="status" value="JOINED"/>
    <property type="molecule type" value="Genomic_DNA"/>
</dbReference>
<dbReference type="EMBL" id="L77497">
    <property type="protein sequence ID" value="AAT00534.2"/>
    <property type="status" value="JOINED"/>
    <property type="molecule type" value="Genomic_DNA"/>
</dbReference>
<dbReference type="EMBL" id="L77498">
    <property type="protein sequence ID" value="AAT00534.2"/>
    <property type="status" value="JOINED"/>
    <property type="molecule type" value="Genomic_DNA"/>
</dbReference>
<dbReference type="EMBL" id="L77499">
    <property type="protein sequence ID" value="AAT00534.2"/>
    <property type="status" value="JOINED"/>
    <property type="molecule type" value="Genomic_DNA"/>
</dbReference>
<dbReference type="EMBL" id="L77500">
    <property type="protein sequence ID" value="AAT00534.2"/>
    <property type="status" value="JOINED"/>
    <property type="molecule type" value="Genomic_DNA"/>
</dbReference>
<dbReference type="EMBL" id="L77501">
    <property type="protein sequence ID" value="AAT00534.2"/>
    <property type="status" value="JOINED"/>
    <property type="molecule type" value="Genomic_DNA"/>
</dbReference>
<dbReference type="EMBL" id="AC187648">
    <property type="status" value="NOT_ANNOTATED_CDS"/>
    <property type="molecule type" value="Genomic_DNA"/>
</dbReference>
<dbReference type="EMBL" id="AK289912">
    <property type="protein sequence ID" value="BAF82601.1"/>
    <property type="molecule type" value="mRNA"/>
</dbReference>
<dbReference type="CCDS" id="CCDS81785.1"/>
<dbReference type="RefSeq" id="NP_002920.1">
    <property type="nucleotide sequence ID" value="NM_002929.3"/>
</dbReference>
<dbReference type="PDB" id="5AFP">
    <property type="method" value="X-ray"/>
    <property type="resolution" value="2.30 A"/>
    <property type="chains" value="C/D=1-25"/>
</dbReference>
<dbReference type="PDBsum" id="5AFP"/>
<dbReference type="SMR" id="Q15835"/>
<dbReference type="BioGRID" id="111943">
    <property type="interactions" value="11"/>
</dbReference>
<dbReference type="FunCoup" id="Q15835">
    <property type="interactions" value="610"/>
</dbReference>
<dbReference type="IntAct" id="Q15835">
    <property type="interactions" value="1"/>
</dbReference>
<dbReference type="STRING" id="9606.ENSP00000334876"/>
<dbReference type="BindingDB" id="Q15835"/>
<dbReference type="ChEMBL" id="CHEMBL5607"/>
<dbReference type="DrugCentral" id="Q15835"/>
<dbReference type="GuidetoPHARMACOLOGY" id="1465"/>
<dbReference type="GlyGen" id="Q15835">
    <property type="glycosylation" value="2 sites, 1 O-linked glycan (1 site)"/>
</dbReference>
<dbReference type="iPTMnet" id="Q15835"/>
<dbReference type="PhosphoSitePlus" id="Q15835"/>
<dbReference type="BioMuta" id="GRK1"/>
<dbReference type="DMDM" id="2833269"/>
<dbReference type="jPOST" id="Q15835"/>
<dbReference type="MassIVE" id="Q15835"/>
<dbReference type="PaxDb" id="9606-ENSP00000334876"/>
<dbReference type="PeptideAtlas" id="Q15835"/>
<dbReference type="ProteomicsDB" id="60785"/>
<dbReference type="Antibodypedia" id="25983">
    <property type="antibodies" value="343 antibodies from 34 providers"/>
</dbReference>
<dbReference type="DNASU" id="6011"/>
<dbReference type="Ensembl" id="ENST00000335678.7">
    <property type="protein sequence ID" value="ENSP00000334876.5"/>
    <property type="gene ID" value="ENSG00000185974.7"/>
</dbReference>
<dbReference type="Ensembl" id="ENST00000672946.1">
    <property type="protein sequence ID" value="ENSP00000499886.1"/>
    <property type="gene ID" value="ENSG00000288263.1"/>
</dbReference>
<dbReference type="GeneID" id="6011"/>
<dbReference type="KEGG" id="hsa:6011"/>
<dbReference type="MANE-Select" id="ENST00000335678.7">
    <property type="protein sequence ID" value="ENSP00000334876.5"/>
    <property type="RefSeq nucleotide sequence ID" value="NM_002929.3"/>
    <property type="RefSeq protein sequence ID" value="NP_002920.1"/>
</dbReference>
<dbReference type="UCSC" id="uc010tkf.3">
    <property type="organism name" value="human"/>
</dbReference>
<dbReference type="AGR" id="HGNC:10013"/>
<dbReference type="CTD" id="6011"/>
<dbReference type="DisGeNET" id="6011"/>
<dbReference type="GeneCards" id="GRK1"/>
<dbReference type="HGNC" id="HGNC:10013">
    <property type="gene designation" value="GRK1"/>
</dbReference>
<dbReference type="HPA" id="ENSG00000185974">
    <property type="expression patterns" value="Tissue enriched (retina)"/>
</dbReference>
<dbReference type="MalaCards" id="GRK1"/>
<dbReference type="MIM" id="180381">
    <property type="type" value="gene"/>
</dbReference>
<dbReference type="MIM" id="613411">
    <property type="type" value="phenotype"/>
</dbReference>
<dbReference type="neXtProt" id="NX_Q15835"/>
<dbReference type="OpenTargets" id="ENSG00000185974"/>
<dbReference type="Orphanet" id="215">
    <property type="disease" value="Congenital stationary night blindness"/>
</dbReference>
<dbReference type="Orphanet" id="75382">
    <property type="disease" value="Oguchi disease"/>
</dbReference>
<dbReference type="PharmGKB" id="PA34391"/>
<dbReference type="VEuPathDB" id="HostDB:ENSG00000185974"/>
<dbReference type="eggNOG" id="KOG0986">
    <property type="taxonomic scope" value="Eukaryota"/>
</dbReference>
<dbReference type="GeneTree" id="ENSGT00940000159927"/>
<dbReference type="HOGENOM" id="CLU_000288_63_41_1"/>
<dbReference type="InParanoid" id="Q15835"/>
<dbReference type="OMA" id="PLSKCEY"/>
<dbReference type="OrthoDB" id="354826at2759"/>
<dbReference type="PAN-GO" id="Q15835">
    <property type="GO annotations" value="4 GO annotations based on evolutionary models"/>
</dbReference>
<dbReference type="PhylomeDB" id="Q15835"/>
<dbReference type="TreeFam" id="TF313940"/>
<dbReference type="BRENDA" id="2.7.11.14">
    <property type="organism ID" value="2681"/>
</dbReference>
<dbReference type="PathwayCommons" id="Q15835"/>
<dbReference type="Reactome" id="R-HSA-2514859">
    <property type="pathway name" value="Inactivation, recovery and regulation of the phototransduction cascade"/>
</dbReference>
<dbReference type="SABIO-RK" id="Q15835"/>
<dbReference type="SignaLink" id="Q15835"/>
<dbReference type="SIGNOR" id="Q15835"/>
<dbReference type="BioGRID-ORCS" id="6011">
    <property type="hits" value="10 hits in 314 CRISPR screens"/>
</dbReference>
<dbReference type="ChiTaRS" id="GRK1">
    <property type="organism name" value="human"/>
</dbReference>
<dbReference type="EvolutionaryTrace" id="Q15835"/>
<dbReference type="GenomeRNAi" id="6011"/>
<dbReference type="Pharos" id="Q15835">
    <property type="development level" value="Tchem"/>
</dbReference>
<dbReference type="PRO" id="PR:Q15835"/>
<dbReference type="Proteomes" id="UP000005640">
    <property type="component" value="Chromosome 13"/>
</dbReference>
<dbReference type="RNAct" id="Q15835">
    <property type="molecule type" value="protein"/>
</dbReference>
<dbReference type="Bgee" id="ENSG00000185974">
    <property type="expression patterns" value="Expressed in male germ line stem cell (sensu Vertebrata) in testis and 40 other cell types or tissues"/>
</dbReference>
<dbReference type="GO" id="GO:0005737">
    <property type="term" value="C:cytoplasm"/>
    <property type="evidence" value="ECO:0000318"/>
    <property type="project" value="GO_Central"/>
</dbReference>
<dbReference type="GO" id="GO:0097381">
    <property type="term" value="C:photoreceptor disc membrane"/>
    <property type="evidence" value="ECO:0000304"/>
    <property type="project" value="Reactome"/>
</dbReference>
<dbReference type="GO" id="GO:0005524">
    <property type="term" value="F:ATP binding"/>
    <property type="evidence" value="ECO:0007669"/>
    <property type="project" value="UniProtKB-KW"/>
</dbReference>
<dbReference type="GO" id="GO:0004672">
    <property type="term" value="F:protein kinase activity"/>
    <property type="evidence" value="ECO:0000304"/>
    <property type="project" value="ProtInc"/>
</dbReference>
<dbReference type="GO" id="GO:0050254">
    <property type="term" value="F:rhodopsin kinase activity"/>
    <property type="evidence" value="ECO:0000314"/>
    <property type="project" value="UniProtKB"/>
</dbReference>
<dbReference type="GO" id="GO:0016056">
    <property type="term" value="P:G protein-coupled opsin signaling pathway"/>
    <property type="evidence" value="ECO:0000304"/>
    <property type="project" value="ProtInc"/>
</dbReference>
<dbReference type="GO" id="GO:0046777">
    <property type="term" value="P:protein autophosphorylation"/>
    <property type="evidence" value="ECO:0000315"/>
    <property type="project" value="UniProtKB"/>
</dbReference>
<dbReference type="GO" id="GO:0008277">
    <property type="term" value="P:regulation of G protein-coupled receptor signaling pathway"/>
    <property type="evidence" value="ECO:0000304"/>
    <property type="project" value="ProtInc"/>
</dbReference>
<dbReference type="GO" id="GO:0022400">
    <property type="term" value="P:regulation of opsin-mediated signaling pathway"/>
    <property type="evidence" value="ECO:0000314"/>
    <property type="project" value="UniProtKB"/>
</dbReference>
<dbReference type="GO" id="GO:0009966">
    <property type="term" value="P:regulation of signal transduction"/>
    <property type="evidence" value="ECO:0000318"/>
    <property type="project" value="GO_Central"/>
</dbReference>
<dbReference type="GO" id="GO:0007601">
    <property type="term" value="P:visual perception"/>
    <property type="evidence" value="ECO:0000304"/>
    <property type="project" value="ProtInc"/>
</dbReference>
<dbReference type="CDD" id="cd05608">
    <property type="entry name" value="STKc_GRK1"/>
    <property type="match status" value="1"/>
</dbReference>
<dbReference type="FunFam" id="1.10.167.10:FF:000028">
    <property type="entry name" value="G protein-coupled receptor kinase"/>
    <property type="match status" value="1"/>
</dbReference>
<dbReference type="FunFam" id="1.10.510.10:FF:000074">
    <property type="entry name" value="G protein-coupled receptor kinase"/>
    <property type="match status" value="1"/>
</dbReference>
<dbReference type="Gene3D" id="3.30.200.20">
    <property type="entry name" value="Phosphorylase Kinase, domain 1"/>
    <property type="match status" value="1"/>
</dbReference>
<dbReference type="Gene3D" id="1.10.167.10">
    <property type="entry name" value="Regulator of G-protein Signalling 4, domain 2"/>
    <property type="match status" value="1"/>
</dbReference>
<dbReference type="Gene3D" id="1.10.510.10">
    <property type="entry name" value="Transferase(Phosphotransferase) domain 1"/>
    <property type="match status" value="1"/>
</dbReference>
<dbReference type="InterPro" id="IPR000961">
    <property type="entry name" value="AGC-kinase_C"/>
</dbReference>
<dbReference type="InterPro" id="IPR000239">
    <property type="entry name" value="GPCR_kinase"/>
</dbReference>
<dbReference type="InterPro" id="IPR037716">
    <property type="entry name" value="GRK1_dom"/>
</dbReference>
<dbReference type="InterPro" id="IPR011009">
    <property type="entry name" value="Kinase-like_dom_sf"/>
</dbReference>
<dbReference type="InterPro" id="IPR000719">
    <property type="entry name" value="Prot_kinase_dom"/>
</dbReference>
<dbReference type="InterPro" id="IPR017441">
    <property type="entry name" value="Protein_kinase_ATP_BS"/>
</dbReference>
<dbReference type="InterPro" id="IPR016137">
    <property type="entry name" value="RGS"/>
</dbReference>
<dbReference type="InterPro" id="IPR036305">
    <property type="entry name" value="RGS_sf"/>
</dbReference>
<dbReference type="InterPro" id="IPR044926">
    <property type="entry name" value="RGS_subdomain_2"/>
</dbReference>
<dbReference type="InterPro" id="IPR008271">
    <property type="entry name" value="Ser/Thr_kinase_AS"/>
</dbReference>
<dbReference type="PANTHER" id="PTHR24355">
    <property type="entry name" value="G PROTEIN-COUPLED RECEPTOR KINASE/RIBOSOMAL PROTEIN S6 KINASE"/>
    <property type="match status" value="1"/>
</dbReference>
<dbReference type="PANTHER" id="PTHR24355:SF11">
    <property type="entry name" value="RHODOPSIN KINASE GRK1"/>
    <property type="match status" value="1"/>
</dbReference>
<dbReference type="Pfam" id="PF00069">
    <property type="entry name" value="Pkinase"/>
    <property type="match status" value="1"/>
</dbReference>
<dbReference type="Pfam" id="PF00615">
    <property type="entry name" value="RGS"/>
    <property type="match status" value="1"/>
</dbReference>
<dbReference type="PRINTS" id="PR00717">
    <property type="entry name" value="GPCRKINASE"/>
</dbReference>
<dbReference type="SMART" id="SM00315">
    <property type="entry name" value="RGS"/>
    <property type="match status" value="1"/>
</dbReference>
<dbReference type="SMART" id="SM00133">
    <property type="entry name" value="S_TK_X"/>
    <property type="match status" value="1"/>
</dbReference>
<dbReference type="SMART" id="SM00220">
    <property type="entry name" value="S_TKc"/>
    <property type="match status" value="1"/>
</dbReference>
<dbReference type="SUPFAM" id="SSF56112">
    <property type="entry name" value="Protein kinase-like (PK-like)"/>
    <property type="match status" value="1"/>
</dbReference>
<dbReference type="SUPFAM" id="SSF48097">
    <property type="entry name" value="Regulator of G-protein signaling, RGS"/>
    <property type="match status" value="1"/>
</dbReference>
<dbReference type="PROSITE" id="PS51285">
    <property type="entry name" value="AGC_KINASE_CTER"/>
    <property type="match status" value="1"/>
</dbReference>
<dbReference type="PROSITE" id="PS00107">
    <property type="entry name" value="PROTEIN_KINASE_ATP"/>
    <property type="match status" value="1"/>
</dbReference>
<dbReference type="PROSITE" id="PS50011">
    <property type="entry name" value="PROTEIN_KINASE_DOM"/>
    <property type="match status" value="1"/>
</dbReference>
<dbReference type="PROSITE" id="PS00108">
    <property type="entry name" value="PROTEIN_KINASE_ST"/>
    <property type="match status" value="1"/>
</dbReference>
<dbReference type="PROSITE" id="PS50132">
    <property type="entry name" value="RGS"/>
    <property type="match status" value="1"/>
</dbReference>
<gene>
    <name evidence="15" type="primary">GRK1</name>
    <name type="synonym">RHOK</name>
</gene>
<sequence length="563" mass="63526">MDFGSLETVVANSAFIAARGSFDGSSSQPSRDKKYLAKLKLPPLSKCESLRDSLSLEFESVCLEQPIGKKLFQQFLQSAEKHLPALELWKDIEDYDTADNDLQPQKAQTILAQYLDPQAKLFCSFLDEGIVAKFKEGPVEIQDGLFQPLLQATLAHLGQAPFQEYLGSLYFLRFLQWKWLEAQPMGEDWFLDFRVLGKGGFGEVSACQMKATGKLYACKKLNKKRLKKRKGYQGAMVEKKILMKVHSRFIVSLAYAFETKADLCLVMTIMNGGDIRYHIYNVNEENPGFPEPRALFYTAQIICGLEHLHQRRIVYRDLKPENVLLDNDGNVRISDLGLAVELLDGQSKTKGYAGTPGFMAPELLQGEEYDFSVDYFALGVTLYEMIAARGPFRARGEKVENKELKHRIISEPVKYPDKFSQASKDFCEALLEKDPEKRLGFRDETCDKLRAHPLFKDLNWRQLEAGMLMPPFIPDSKTVYAKDIQDVGAFSTVKGVAFDKTDTEFFQEFATGNCPIPWQEEMIETGIFGELNVWRSDGQMPDDMKGISGGSSSSSKSGMCLVS</sequence>
<organism>
    <name type="scientific">Homo sapiens</name>
    <name type="common">Human</name>
    <dbReference type="NCBI Taxonomy" id="9606"/>
    <lineage>
        <taxon>Eukaryota</taxon>
        <taxon>Metazoa</taxon>
        <taxon>Chordata</taxon>
        <taxon>Craniata</taxon>
        <taxon>Vertebrata</taxon>
        <taxon>Euteleostomi</taxon>
        <taxon>Mammalia</taxon>
        <taxon>Eutheria</taxon>
        <taxon>Euarchontoglires</taxon>
        <taxon>Primates</taxon>
        <taxon>Haplorrhini</taxon>
        <taxon>Catarrhini</taxon>
        <taxon>Hominidae</taxon>
        <taxon>Homo</taxon>
    </lineage>
</organism>
<evidence type="ECO:0000250" key="1"/>
<evidence type="ECO:0000250" key="2">
    <source>
        <dbReference type="UniProtKB" id="P28327"/>
    </source>
</evidence>
<evidence type="ECO:0000250" key="3">
    <source>
        <dbReference type="UniProtKB" id="Q9WVL4"/>
    </source>
</evidence>
<evidence type="ECO:0000255" key="4">
    <source>
        <dbReference type="PROSITE-ProRule" id="PRU00159"/>
    </source>
</evidence>
<evidence type="ECO:0000255" key="5">
    <source>
        <dbReference type="PROSITE-ProRule" id="PRU00171"/>
    </source>
</evidence>
<evidence type="ECO:0000255" key="6">
    <source>
        <dbReference type="PROSITE-ProRule" id="PRU00618"/>
    </source>
</evidence>
<evidence type="ECO:0000255" key="7">
    <source>
        <dbReference type="PROSITE-ProRule" id="PRU10027"/>
    </source>
</evidence>
<evidence type="ECO:0000256" key="8">
    <source>
        <dbReference type="SAM" id="MobiDB-lite"/>
    </source>
</evidence>
<evidence type="ECO:0000269" key="9">
    <source>
    </source>
</evidence>
<evidence type="ECO:0000269" key="10">
    <source>
    </source>
</evidence>
<evidence type="ECO:0000269" key="11">
    <source>
    </source>
</evidence>
<evidence type="ECO:0000269" key="12">
    <source>
    </source>
</evidence>
<evidence type="ECO:0000269" key="13">
    <source>
    </source>
</evidence>
<evidence type="ECO:0000305" key="14"/>
<evidence type="ECO:0000312" key="15">
    <source>
        <dbReference type="HGNC" id="HGNC:10013"/>
    </source>
</evidence>
<evidence type="ECO:0007744" key="16">
    <source>
        <dbReference type="PDB" id="5AFP"/>
    </source>
</evidence>
<evidence type="ECO:0007829" key="17">
    <source>
        <dbReference type="PDB" id="5AFP"/>
    </source>
</evidence>
<comment type="function">
    <text evidence="3 10">Retina-specific kinase involved in the signal turnoff via phosphorylation of rhodopsin (RHO), the G protein- coupled receptor that initiates the phototransduction cascade (PubMed:15946941). This rapid desensitization is essential for scotopic vision and permits rapid adaptation to changes in illumination (By similarity). May play a role in the maintenance of the outer nuclear layer in the retina (By similarity).</text>
</comment>
<comment type="catalytic activity">
    <reaction evidence="10">
        <text>L-threonyl-[rhodopsin] + ATP = O-phospho-L-threonyl-[rhodopsin] + ADP + H(+)</text>
        <dbReference type="Rhea" id="RHEA:56552"/>
        <dbReference type="Rhea" id="RHEA-COMP:14596"/>
        <dbReference type="Rhea" id="RHEA-COMP:14597"/>
        <dbReference type="ChEBI" id="CHEBI:15378"/>
        <dbReference type="ChEBI" id="CHEBI:30013"/>
        <dbReference type="ChEBI" id="CHEBI:30616"/>
        <dbReference type="ChEBI" id="CHEBI:61977"/>
        <dbReference type="ChEBI" id="CHEBI:456216"/>
        <dbReference type="EC" id="2.7.11.14"/>
    </reaction>
</comment>
<comment type="catalytic activity">
    <reaction evidence="10">
        <text>L-seryl-[rhodopsin] + ATP = O-phospho-L-seryl-[rhodopsin] + ADP + H(+)</text>
        <dbReference type="Rhea" id="RHEA:23356"/>
        <dbReference type="Rhea" id="RHEA-COMP:14594"/>
        <dbReference type="Rhea" id="RHEA-COMP:14595"/>
        <dbReference type="ChEBI" id="CHEBI:15378"/>
        <dbReference type="ChEBI" id="CHEBI:29999"/>
        <dbReference type="ChEBI" id="CHEBI:30616"/>
        <dbReference type="ChEBI" id="CHEBI:83421"/>
        <dbReference type="ChEBI" id="CHEBI:456216"/>
        <dbReference type="EC" id="2.7.11.14"/>
    </reaction>
</comment>
<comment type="activity regulation">
    <text evidence="2 10">Inhibited by RCVRN, which prevents the interaction between GRK1 and RHO (By similarity). Inhibition is calcium-dependent (By similarity). Inhibited by phosphorylation of Ser-21.</text>
</comment>
<comment type="biophysicochemical properties">
    <kinetics>
        <KM evidence="10">3.5 uM for rhodopsin</KM>
        <KM evidence="10">10.6 uM for ATP</KM>
        <Vmax evidence="10">1132.0 nmol/min/mg enzyme</Vmax>
    </kinetics>
</comment>
<comment type="subunit">
    <text evidence="2">Interacts (via N-terminus) with RCVRN (via C-terminus); the interaction is Ca(2+)-dependent (By similarity). Interacts (when prenylated) with PDE6D; this promotes release from membranes (By similarity). May form a complex composed of RHO, GRK1 and RCVRN in a Ca(2+)-dependent manner; RCVRN prevents the interaction between GRK1 and RHO (By similarity).</text>
</comment>
<comment type="subcellular location">
    <subcellularLocation>
        <location evidence="2">Membrane</location>
        <topology evidence="2">Lipid-anchor</topology>
    </subcellularLocation>
    <subcellularLocation>
        <location evidence="3">Cell projection</location>
        <location evidence="3">Cilium</location>
        <location evidence="3">Photoreceptor outer segment</location>
    </subcellularLocation>
    <text evidence="3">Subcellular location is not affected by light or dark conditions.</text>
</comment>
<comment type="tissue specificity">
    <text evidence="9">Retinal-specific. Expressed in rods and cones cells.</text>
</comment>
<comment type="PTM">
    <text evidence="1 10">Autophosphorylated, Ser-21 is a minor site of autophosphorylation compared to Ser-491 and Thr-492 (By similarity). Phosphorylation at Ser-21 is regulated by light and activated by cAMP.</text>
</comment>
<comment type="PTM">
    <text evidence="2">Farnesylation is required for full activity.</text>
</comment>
<comment type="disease" evidence="11 12">
    <disease id="DI-02770">
        <name>Night blindness, congenital stationary, Oguchi type 2</name>
        <acronym>CSNBO2</acronym>
        <description>A non-progressive retinal disorder characterized by impaired night vision, often associated with nystagmus and myopia. Congenital stationary night blindness Oguchi type is associated with fundus discoloration and abnormally slow dark adaptation.</description>
        <dbReference type="MIM" id="613411"/>
    </disease>
    <text>The disease is caused by variants affecting the gene represented in this entry.</text>
</comment>
<comment type="similarity">
    <text evidence="14">Belongs to the protein kinase superfamily. AGC Ser/Thr protein kinase family. GPRK subfamily.</text>
</comment>
<name>GRK1_HUMAN</name>
<reference key="1">
    <citation type="journal article" date="1997" name="Vis. Neurosci.">
        <title>Molecular cloning and localization of rhodopsin kinase in the mammalian pineal.</title>
        <authorList>
            <person name="Zhao X."/>
            <person name="Haeseleer F."/>
            <person name="Fariss R.N."/>
            <person name="Huang J."/>
            <person name="Baehr W."/>
            <person name="Milam A.H."/>
            <person name="Palczewski K."/>
        </authorList>
    </citation>
    <scope>NUCLEOTIDE SEQUENCE [MRNA]</scope>
    <source>
        <tissue>Retina</tissue>
    </source>
</reference>
<reference key="2">
    <citation type="journal article" date="1996" name="Genomics">
        <title>Characterization and chromosomal localization of the gene for human rhodopsin kinase.</title>
        <authorList>
            <person name="Khani S.C."/>
            <person name="Abitbol M."/>
            <person name="Yamamoto S."/>
            <person name="Maravic-Magovcevic I."/>
            <person name="Dryja T.P."/>
        </authorList>
    </citation>
    <scope>NUCLEOTIDE SEQUENCE [GENOMIC DNA / MRNA]</scope>
</reference>
<reference key="3">
    <citation type="journal article" date="2004" name="Nat. Genet.">
        <title>Complete sequencing and characterization of 21,243 full-length human cDNAs.</title>
        <authorList>
            <person name="Ota T."/>
            <person name="Suzuki Y."/>
            <person name="Nishikawa T."/>
            <person name="Otsuki T."/>
            <person name="Sugiyama T."/>
            <person name="Irie R."/>
            <person name="Wakamatsu A."/>
            <person name="Hayashi K."/>
            <person name="Sato H."/>
            <person name="Nagai K."/>
            <person name="Kimura K."/>
            <person name="Makita H."/>
            <person name="Sekine M."/>
            <person name="Obayashi M."/>
            <person name="Nishi T."/>
            <person name="Shibahara T."/>
            <person name="Tanaka T."/>
            <person name="Ishii S."/>
            <person name="Yamamoto J."/>
            <person name="Saito K."/>
            <person name="Kawai Y."/>
            <person name="Isono Y."/>
            <person name="Nakamura Y."/>
            <person name="Nagahari K."/>
            <person name="Murakami K."/>
            <person name="Yasuda T."/>
            <person name="Iwayanagi T."/>
            <person name="Wagatsuma M."/>
            <person name="Shiratori A."/>
            <person name="Sudo H."/>
            <person name="Hosoiri T."/>
            <person name="Kaku Y."/>
            <person name="Kodaira H."/>
            <person name="Kondo H."/>
            <person name="Sugawara M."/>
            <person name="Takahashi M."/>
            <person name="Kanda K."/>
            <person name="Yokoi T."/>
            <person name="Furuya T."/>
            <person name="Kikkawa E."/>
            <person name="Omura Y."/>
            <person name="Abe K."/>
            <person name="Kamihara K."/>
            <person name="Katsuta N."/>
            <person name="Sato K."/>
            <person name="Tanikawa M."/>
            <person name="Yamazaki M."/>
            <person name="Ninomiya K."/>
            <person name="Ishibashi T."/>
            <person name="Yamashita H."/>
            <person name="Murakawa K."/>
            <person name="Fujimori K."/>
            <person name="Tanai H."/>
            <person name="Kimata M."/>
            <person name="Watanabe M."/>
            <person name="Hiraoka S."/>
            <person name="Chiba Y."/>
            <person name="Ishida S."/>
            <person name="Ono Y."/>
            <person name="Takiguchi S."/>
            <person name="Watanabe S."/>
            <person name="Yosida M."/>
            <person name="Hotuta T."/>
            <person name="Kusano J."/>
            <person name="Kanehori K."/>
            <person name="Takahashi-Fujii A."/>
            <person name="Hara H."/>
            <person name="Tanase T.-O."/>
            <person name="Nomura Y."/>
            <person name="Togiya S."/>
            <person name="Komai F."/>
            <person name="Hara R."/>
            <person name="Takeuchi K."/>
            <person name="Arita M."/>
            <person name="Imose N."/>
            <person name="Musashino K."/>
            <person name="Yuuki H."/>
            <person name="Oshima A."/>
            <person name="Sasaki N."/>
            <person name="Aotsuka S."/>
            <person name="Yoshikawa Y."/>
            <person name="Matsunawa H."/>
            <person name="Ichihara T."/>
            <person name="Shiohata N."/>
            <person name="Sano S."/>
            <person name="Moriya S."/>
            <person name="Momiyama H."/>
            <person name="Satoh N."/>
            <person name="Takami S."/>
            <person name="Terashima Y."/>
            <person name="Suzuki O."/>
            <person name="Nakagawa S."/>
            <person name="Senoh A."/>
            <person name="Mizoguchi H."/>
            <person name="Goto Y."/>
            <person name="Shimizu F."/>
            <person name="Wakebe H."/>
            <person name="Hishigaki H."/>
            <person name="Watanabe T."/>
            <person name="Sugiyama A."/>
            <person name="Takemoto M."/>
            <person name="Kawakami B."/>
            <person name="Yamazaki M."/>
            <person name="Watanabe K."/>
            <person name="Kumagai A."/>
            <person name="Itakura S."/>
            <person name="Fukuzumi Y."/>
            <person name="Fujimori Y."/>
            <person name="Komiyama M."/>
            <person name="Tashiro H."/>
            <person name="Tanigami A."/>
            <person name="Fujiwara T."/>
            <person name="Ono T."/>
            <person name="Yamada K."/>
            <person name="Fujii Y."/>
            <person name="Ozaki K."/>
            <person name="Hirao M."/>
            <person name="Ohmori Y."/>
            <person name="Kawabata A."/>
            <person name="Hikiji T."/>
            <person name="Kobatake N."/>
            <person name="Inagaki H."/>
            <person name="Ikema Y."/>
            <person name="Okamoto S."/>
            <person name="Okitani R."/>
            <person name="Kawakami T."/>
            <person name="Noguchi S."/>
            <person name="Itoh T."/>
            <person name="Shigeta K."/>
            <person name="Senba T."/>
            <person name="Matsumura K."/>
            <person name="Nakajima Y."/>
            <person name="Mizuno T."/>
            <person name="Morinaga M."/>
            <person name="Sasaki M."/>
            <person name="Togashi T."/>
            <person name="Oyama M."/>
            <person name="Hata H."/>
            <person name="Watanabe M."/>
            <person name="Komatsu T."/>
            <person name="Mizushima-Sugano J."/>
            <person name="Satoh T."/>
            <person name="Shirai Y."/>
            <person name="Takahashi Y."/>
            <person name="Nakagawa K."/>
            <person name="Okumura K."/>
            <person name="Nagase T."/>
            <person name="Nomura N."/>
            <person name="Kikuchi H."/>
            <person name="Masuho Y."/>
            <person name="Yamashita R."/>
            <person name="Nakai K."/>
            <person name="Yada T."/>
            <person name="Nakamura Y."/>
            <person name="Ohara O."/>
            <person name="Isogai T."/>
            <person name="Sugano S."/>
        </authorList>
    </citation>
    <scope>NUCLEOTIDE SEQUENCE [LARGE SCALE MRNA]</scope>
    <source>
        <tissue>Corpus callosum</tissue>
    </source>
</reference>
<reference key="4">
    <citation type="journal article" date="2004" name="Nature">
        <title>The DNA sequence and analysis of human chromosome 13.</title>
        <authorList>
            <person name="Dunham A."/>
            <person name="Matthews L.H."/>
            <person name="Burton J."/>
            <person name="Ashurst J.L."/>
            <person name="Howe K.L."/>
            <person name="Ashcroft K.J."/>
            <person name="Beare D.M."/>
            <person name="Burford D.C."/>
            <person name="Hunt S.E."/>
            <person name="Griffiths-Jones S."/>
            <person name="Jones M.C."/>
            <person name="Keenan S.J."/>
            <person name="Oliver K."/>
            <person name="Scott C.E."/>
            <person name="Ainscough R."/>
            <person name="Almeida J.P."/>
            <person name="Ambrose K.D."/>
            <person name="Andrews D.T."/>
            <person name="Ashwell R.I.S."/>
            <person name="Babbage A.K."/>
            <person name="Bagguley C.L."/>
            <person name="Bailey J."/>
            <person name="Bannerjee R."/>
            <person name="Barlow K.F."/>
            <person name="Bates K."/>
            <person name="Beasley H."/>
            <person name="Bird C.P."/>
            <person name="Bray-Allen S."/>
            <person name="Brown A.J."/>
            <person name="Brown J.Y."/>
            <person name="Burrill W."/>
            <person name="Carder C."/>
            <person name="Carter N.P."/>
            <person name="Chapman J.C."/>
            <person name="Clamp M.E."/>
            <person name="Clark S.Y."/>
            <person name="Clarke G."/>
            <person name="Clee C.M."/>
            <person name="Clegg S.C."/>
            <person name="Cobley V."/>
            <person name="Collins J.E."/>
            <person name="Corby N."/>
            <person name="Coville G.J."/>
            <person name="Deloukas P."/>
            <person name="Dhami P."/>
            <person name="Dunham I."/>
            <person name="Dunn M."/>
            <person name="Earthrowl M.E."/>
            <person name="Ellington A.G."/>
            <person name="Faulkner L."/>
            <person name="Frankish A.G."/>
            <person name="Frankland J."/>
            <person name="French L."/>
            <person name="Garner P."/>
            <person name="Garnett J."/>
            <person name="Gilbert J.G.R."/>
            <person name="Gilson C.J."/>
            <person name="Ghori J."/>
            <person name="Grafham D.V."/>
            <person name="Gribble S.M."/>
            <person name="Griffiths C."/>
            <person name="Hall R.E."/>
            <person name="Hammond S."/>
            <person name="Harley J.L."/>
            <person name="Hart E.A."/>
            <person name="Heath P.D."/>
            <person name="Howden P.J."/>
            <person name="Huckle E.J."/>
            <person name="Hunt P.J."/>
            <person name="Hunt A.R."/>
            <person name="Johnson C."/>
            <person name="Johnson D."/>
            <person name="Kay M."/>
            <person name="Kimberley A.M."/>
            <person name="King A."/>
            <person name="Laird G.K."/>
            <person name="Langford C.J."/>
            <person name="Lawlor S."/>
            <person name="Leongamornlert D.A."/>
            <person name="Lloyd D.M."/>
            <person name="Lloyd C."/>
            <person name="Loveland J.E."/>
            <person name="Lovell J."/>
            <person name="Martin S."/>
            <person name="Mashreghi-Mohammadi M."/>
            <person name="McLaren S.J."/>
            <person name="McMurray A."/>
            <person name="Milne S."/>
            <person name="Moore M.J.F."/>
            <person name="Nickerson T."/>
            <person name="Palmer S.A."/>
            <person name="Pearce A.V."/>
            <person name="Peck A.I."/>
            <person name="Pelan S."/>
            <person name="Phillimore B."/>
            <person name="Porter K.M."/>
            <person name="Rice C.M."/>
            <person name="Searle S."/>
            <person name="Sehra H.K."/>
            <person name="Shownkeen R."/>
            <person name="Skuce C.D."/>
            <person name="Smith M."/>
            <person name="Steward C.A."/>
            <person name="Sycamore N."/>
            <person name="Tester J."/>
            <person name="Thomas D.W."/>
            <person name="Tracey A."/>
            <person name="Tromans A."/>
            <person name="Tubby B."/>
            <person name="Wall M."/>
            <person name="Wallis J.M."/>
            <person name="West A.P."/>
            <person name="Whitehead S.L."/>
            <person name="Willey D.L."/>
            <person name="Wilming L."/>
            <person name="Wray P.W."/>
            <person name="Wright M.W."/>
            <person name="Young L."/>
            <person name="Coulson A."/>
            <person name="Durbin R.M."/>
            <person name="Hubbard T."/>
            <person name="Sulston J.E."/>
            <person name="Beck S."/>
            <person name="Bentley D.R."/>
            <person name="Rogers J."/>
            <person name="Ross M.T."/>
        </authorList>
    </citation>
    <scope>NUCLEOTIDE SEQUENCE [LARGE SCALE GENOMIC DNA]</scope>
</reference>
<reference key="5">
    <citation type="journal article" date="2001" name="J. Neurosci.">
        <title>Species-specific differences in expression of G-protein-coupled receptor kinase (GRK) 7 and GRK1 in mammalian cone photoreceptor cells: implications for cone cell phototransduction.</title>
        <authorList>
            <person name="Weiss E.R."/>
            <person name="Ducceschi M.H."/>
            <person name="Horner T.J."/>
            <person name="Li A."/>
            <person name="Craft C.M."/>
            <person name="Osawa S."/>
        </authorList>
    </citation>
    <scope>TISSUE SPECIFICITY</scope>
</reference>
<reference key="6">
    <citation type="journal article" date="2005" name="J. Biol. Chem.">
        <title>Phosphorylation of GRK1 and GRK7 by cAMP-dependent protein kinase attenuates their enzymatic activities.</title>
        <authorList>
            <person name="Horner T.J."/>
            <person name="Osawa S."/>
            <person name="Schaller M.D."/>
            <person name="Weiss E.R."/>
        </authorList>
    </citation>
    <scope>BIOPHYSICOCHEMICAL PROPERTIES</scope>
    <scope>CATALYTIC ACTIVITY</scope>
    <scope>FUNCTION IN PHOSPHORYLATION OF RHO</scope>
    <scope>PHOSPHORYLATION AT SER-21</scope>
    <scope>ACTIVITY REGULATION</scope>
    <scope>AUTOPHOSPHORYLATION</scope>
    <scope>MUTAGENESIS OF SER-21 AND LYS-219</scope>
</reference>
<reference evidence="16" key="7">
    <citation type="journal article" date="2015" name="J. Biol. Chem.">
        <title>Neuronal Calcium Sensor-1 Binds the D2 Dopamine Receptor and G-protein-coupled Receptor Kinase 1 (GRK1) Peptides Using Different Modes of Interactions.</title>
        <authorList>
            <person name="Pandalaneni S."/>
            <person name="Karuppiah V."/>
            <person name="Saleem M."/>
            <person name="Haynes L.P."/>
            <person name="Burgoyne R.D."/>
            <person name="Mayans O."/>
            <person name="Derrick J.P."/>
            <person name="Lian L.Y."/>
        </authorList>
    </citation>
    <scope>X-RAY CRYSTALLOGRAPHY (2.30 ANGSTROMS) OF 1-25 IN COMPLEX WITH NCS1</scope>
</reference>
<reference key="8">
    <citation type="journal article" date="1997" name="Exp. Eye Res.">
        <title>Evaluation of the rhodopsin kinase gene in patients with retinitis pigmentosa.</title>
        <authorList>
            <person name="Yamamoto S."/>
            <person name="Khani S.C."/>
            <person name="Berson E.L."/>
            <person name="Dryja T.P."/>
        </authorList>
    </citation>
    <scope>VARIANTS GLN-136; MET-298; SER-330; HIS-438; SER-514; THR-522 AND LEU-536</scope>
</reference>
<reference key="9">
    <citation type="journal article" date="1997" name="Nat. Genet.">
        <title>Defects in the rhodopsin kinase gene in the Oguchi form of stationary night blindness.</title>
        <authorList>
            <person name="Yamamoto S."/>
            <person name="Sippel K.C."/>
            <person name="Berson E.L."/>
            <person name="Dryja T.P."/>
        </authorList>
    </citation>
    <scope>VARIANT CSNBO2 ASP-380</scope>
</reference>
<reference key="10">
    <citation type="journal article" date="2007" name="Ophthalmology">
        <title>A novel homozygous GRK1 mutation (P391H) in 2 siblings with Oguchi disease with markedly reduced cone responses.</title>
        <authorList>
            <person name="Hayashi T."/>
            <person name="Gekka T."/>
            <person name="Takeuchi T."/>
            <person name="Goto-Omoto S."/>
            <person name="Kitahara K."/>
        </authorList>
    </citation>
    <scope>VARIANT CSNBO2 HIS-391</scope>
</reference>